<sequence>MSLSLWQQCLARLQDELPATEFSMWIRPLQAELSDNTLALYAPNRFVLDWVRDKYLNNINGLLTSFCGADAPQLRFEVGTKPVTQTPQAAVTSNVAAPAQVAQTQPQRAAPSTRSGWDNVPAPAEPTYRSNVNVKHTFDNFVEGKSNQLARAAARQVADNPGGAYNPLFLYGGTGLGKTHLLHAVGNGIMARKPNAKVVYMHSERFVQDMVKALQNNAIEEFKRYYRSVDALLIDDIQFFANKERSQEEFFHTFNALLEGNQQIILTSDRYPKEINGVEDRLKSRFGWGLTVAIEPPELETRVAILMKKADENDIRLPGEVAFFIAKRLRSNVRELEGALNRVIANANFTGRAITIDFVREALRDLLALQEKLVTIDNIQKTVAEYYKIKVADLLSKRRSRSVARPRQMAMALAKELTNHSLPEIGDAFGGRDHTTVLHACRKIEQLREESHDIKEDFSNLIRTLSS</sequence>
<name>DNAA_ECO24</name>
<proteinExistence type="inferred from homology"/>
<comment type="function">
    <text evidence="1">Plays an essential role in the initiation and regulation of chromosomal replication. ATP-DnaA binds to the origin of replication (oriC) to initiate formation of the DNA replication initiation complex once per cell cycle. Binds the DnaA box (a 9 base pair repeat at the origin) and separates the double-stranded (ds)DNA. Forms a right-handed helical filament on oriC DNA; dsDNA binds to the exterior of the filament while single-stranded (ss)DNA is stabiized in the filament's interior. The ATP-DnaA-oriC complex binds and stabilizes one strand of the AT-rich DNA unwinding element (DUE), permitting loading of DNA polymerase. After initiation quickly degrades to an ADP-DnaA complex that is not apt for DNA replication. Binds acidic phospholipids.</text>
</comment>
<comment type="subunit">
    <text evidence="1">Oligomerizes as a right-handed, spiral filament on DNA at oriC.</text>
</comment>
<comment type="subcellular location">
    <subcellularLocation>
        <location evidence="1">Cytoplasm</location>
    </subcellularLocation>
</comment>
<comment type="domain">
    <text evidence="1">Domain I is involved in oligomerization and binding regulators, domain II is flexibile and of varying length in different bacteria, domain III forms the AAA+ region, while domain IV binds dsDNA.</text>
</comment>
<comment type="similarity">
    <text evidence="1">Belongs to the DnaA family.</text>
</comment>
<protein>
    <recommendedName>
        <fullName evidence="1">Chromosomal replication initiator protein DnaA</fullName>
    </recommendedName>
</protein>
<evidence type="ECO:0000255" key="1">
    <source>
        <dbReference type="HAMAP-Rule" id="MF_00377"/>
    </source>
</evidence>
<evidence type="ECO:0000256" key="2">
    <source>
        <dbReference type="SAM" id="MobiDB-lite"/>
    </source>
</evidence>
<gene>
    <name evidence="1" type="primary">dnaA</name>
    <name type="ordered locus">EcE24377A_4212</name>
</gene>
<reference key="1">
    <citation type="journal article" date="2008" name="J. Bacteriol.">
        <title>The pangenome structure of Escherichia coli: comparative genomic analysis of E. coli commensal and pathogenic isolates.</title>
        <authorList>
            <person name="Rasko D.A."/>
            <person name="Rosovitz M.J."/>
            <person name="Myers G.S.A."/>
            <person name="Mongodin E.F."/>
            <person name="Fricke W.F."/>
            <person name="Gajer P."/>
            <person name="Crabtree J."/>
            <person name="Sebaihia M."/>
            <person name="Thomson N.R."/>
            <person name="Chaudhuri R."/>
            <person name="Henderson I.R."/>
            <person name="Sperandio V."/>
            <person name="Ravel J."/>
        </authorList>
    </citation>
    <scope>NUCLEOTIDE SEQUENCE [LARGE SCALE GENOMIC DNA]</scope>
    <source>
        <strain>E24377A / ETEC</strain>
    </source>
</reference>
<keyword id="KW-0067">ATP-binding</keyword>
<keyword id="KW-0963">Cytoplasm</keyword>
<keyword id="KW-0235">DNA replication</keyword>
<keyword id="KW-0238">DNA-binding</keyword>
<keyword id="KW-0446">Lipid-binding</keyword>
<keyword id="KW-0547">Nucleotide-binding</keyword>
<keyword id="KW-1185">Reference proteome</keyword>
<accession>A7ZTQ8</accession>
<feature type="chain" id="PRO_1000060012" description="Chromosomal replication initiator protein DnaA">
    <location>
        <begin position="1"/>
        <end position="467"/>
    </location>
</feature>
<feature type="region of interest" description="Domain I, interacts with DnaA modulators" evidence="1">
    <location>
        <begin position="1"/>
        <end position="90"/>
    </location>
</feature>
<feature type="region of interest" description="Domain II" evidence="1">
    <location>
        <begin position="91"/>
        <end position="130"/>
    </location>
</feature>
<feature type="region of interest" description="Disordered" evidence="2">
    <location>
        <begin position="98"/>
        <end position="119"/>
    </location>
</feature>
<feature type="region of interest" description="Domain III, AAA+ region" evidence="1">
    <location>
        <begin position="131"/>
        <end position="347"/>
    </location>
</feature>
<feature type="region of interest" description="Domain IV, binds dsDNA" evidence="1">
    <location>
        <begin position="348"/>
        <end position="467"/>
    </location>
</feature>
<feature type="compositionally biased region" description="Low complexity" evidence="2">
    <location>
        <begin position="98"/>
        <end position="111"/>
    </location>
</feature>
<feature type="binding site" evidence="1">
    <location>
        <position position="175"/>
    </location>
    <ligand>
        <name>ATP</name>
        <dbReference type="ChEBI" id="CHEBI:30616"/>
    </ligand>
</feature>
<feature type="binding site" evidence="1">
    <location>
        <position position="177"/>
    </location>
    <ligand>
        <name>ATP</name>
        <dbReference type="ChEBI" id="CHEBI:30616"/>
    </ligand>
</feature>
<feature type="binding site" evidence="1">
    <location>
        <position position="178"/>
    </location>
    <ligand>
        <name>ATP</name>
        <dbReference type="ChEBI" id="CHEBI:30616"/>
    </ligand>
</feature>
<feature type="binding site" evidence="1">
    <location>
        <position position="179"/>
    </location>
    <ligand>
        <name>ATP</name>
        <dbReference type="ChEBI" id="CHEBI:30616"/>
    </ligand>
</feature>
<organism>
    <name type="scientific">Escherichia coli O139:H28 (strain E24377A / ETEC)</name>
    <dbReference type="NCBI Taxonomy" id="331111"/>
    <lineage>
        <taxon>Bacteria</taxon>
        <taxon>Pseudomonadati</taxon>
        <taxon>Pseudomonadota</taxon>
        <taxon>Gammaproteobacteria</taxon>
        <taxon>Enterobacterales</taxon>
        <taxon>Enterobacteriaceae</taxon>
        <taxon>Escherichia</taxon>
    </lineage>
</organism>
<dbReference type="EMBL" id="CP000800">
    <property type="protein sequence ID" value="ABV16793.1"/>
    <property type="molecule type" value="Genomic_DNA"/>
</dbReference>
<dbReference type="RefSeq" id="WP_000059111.1">
    <property type="nucleotide sequence ID" value="NC_009801.1"/>
</dbReference>
<dbReference type="BMRB" id="A7ZTQ8"/>
<dbReference type="SMR" id="A7ZTQ8"/>
<dbReference type="GeneID" id="93778443"/>
<dbReference type="KEGG" id="ecw:EcE24377A_4212"/>
<dbReference type="HOGENOM" id="CLU_026910_0_1_6"/>
<dbReference type="Proteomes" id="UP000001122">
    <property type="component" value="Chromosome"/>
</dbReference>
<dbReference type="GO" id="GO:0005737">
    <property type="term" value="C:cytoplasm"/>
    <property type="evidence" value="ECO:0007669"/>
    <property type="project" value="UniProtKB-SubCell"/>
</dbReference>
<dbReference type="GO" id="GO:0005886">
    <property type="term" value="C:plasma membrane"/>
    <property type="evidence" value="ECO:0007669"/>
    <property type="project" value="TreeGrafter"/>
</dbReference>
<dbReference type="GO" id="GO:0005524">
    <property type="term" value="F:ATP binding"/>
    <property type="evidence" value="ECO:0007669"/>
    <property type="project" value="UniProtKB-UniRule"/>
</dbReference>
<dbReference type="GO" id="GO:0016887">
    <property type="term" value="F:ATP hydrolysis activity"/>
    <property type="evidence" value="ECO:0007669"/>
    <property type="project" value="InterPro"/>
</dbReference>
<dbReference type="GO" id="GO:0003688">
    <property type="term" value="F:DNA replication origin binding"/>
    <property type="evidence" value="ECO:0007669"/>
    <property type="project" value="UniProtKB-UniRule"/>
</dbReference>
<dbReference type="GO" id="GO:0008289">
    <property type="term" value="F:lipid binding"/>
    <property type="evidence" value="ECO:0007669"/>
    <property type="project" value="UniProtKB-KW"/>
</dbReference>
<dbReference type="GO" id="GO:0006270">
    <property type="term" value="P:DNA replication initiation"/>
    <property type="evidence" value="ECO:0007669"/>
    <property type="project" value="UniProtKB-UniRule"/>
</dbReference>
<dbReference type="GO" id="GO:0006275">
    <property type="term" value="P:regulation of DNA replication"/>
    <property type="evidence" value="ECO:0007669"/>
    <property type="project" value="UniProtKB-UniRule"/>
</dbReference>
<dbReference type="CDD" id="cd00009">
    <property type="entry name" value="AAA"/>
    <property type="match status" value="1"/>
</dbReference>
<dbReference type="CDD" id="cd06571">
    <property type="entry name" value="Bac_DnaA_C"/>
    <property type="match status" value="1"/>
</dbReference>
<dbReference type="FunFam" id="1.10.1750.10:FF:000001">
    <property type="entry name" value="Chromosomal replication initiator protein DnaA"/>
    <property type="match status" value="1"/>
</dbReference>
<dbReference type="FunFam" id="1.10.8.60:FF:000003">
    <property type="entry name" value="Chromosomal replication initiator protein DnaA"/>
    <property type="match status" value="1"/>
</dbReference>
<dbReference type="FunFam" id="3.30.300.180:FF:000001">
    <property type="entry name" value="Chromosomal replication initiator protein DnaA"/>
    <property type="match status" value="1"/>
</dbReference>
<dbReference type="FunFam" id="3.40.50.300:FF:000103">
    <property type="entry name" value="Chromosomal replication initiator protein DnaA"/>
    <property type="match status" value="1"/>
</dbReference>
<dbReference type="Gene3D" id="1.10.1750.10">
    <property type="match status" value="1"/>
</dbReference>
<dbReference type="Gene3D" id="1.10.8.60">
    <property type="match status" value="1"/>
</dbReference>
<dbReference type="Gene3D" id="3.30.300.180">
    <property type="match status" value="1"/>
</dbReference>
<dbReference type="Gene3D" id="3.40.50.300">
    <property type="entry name" value="P-loop containing nucleotide triphosphate hydrolases"/>
    <property type="match status" value="1"/>
</dbReference>
<dbReference type="HAMAP" id="MF_00377">
    <property type="entry name" value="DnaA_bact"/>
    <property type="match status" value="1"/>
</dbReference>
<dbReference type="InterPro" id="IPR003593">
    <property type="entry name" value="AAA+_ATPase"/>
</dbReference>
<dbReference type="InterPro" id="IPR001957">
    <property type="entry name" value="Chromosome_initiator_DnaA"/>
</dbReference>
<dbReference type="InterPro" id="IPR020591">
    <property type="entry name" value="Chromosome_initiator_DnaA-like"/>
</dbReference>
<dbReference type="InterPro" id="IPR018312">
    <property type="entry name" value="Chromosome_initiator_DnaA_CS"/>
</dbReference>
<dbReference type="InterPro" id="IPR013159">
    <property type="entry name" value="DnaA_C"/>
</dbReference>
<dbReference type="InterPro" id="IPR013317">
    <property type="entry name" value="DnaA_dom"/>
</dbReference>
<dbReference type="InterPro" id="IPR024633">
    <property type="entry name" value="DnaA_N_dom"/>
</dbReference>
<dbReference type="InterPro" id="IPR038454">
    <property type="entry name" value="DnaA_N_sf"/>
</dbReference>
<dbReference type="InterPro" id="IPR027417">
    <property type="entry name" value="P-loop_NTPase"/>
</dbReference>
<dbReference type="InterPro" id="IPR010921">
    <property type="entry name" value="Trp_repressor/repl_initiator"/>
</dbReference>
<dbReference type="NCBIfam" id="TIGR00362">
    <property type="entry name" value="DnaA"/>
    <property type="match status" value="1"/>
</dbReference>
<dbReference type="PANTHER" id="PTHR30050">
    <property type="entry name" value="CHROMOSOMAL REPLICATION INITIATOR PROTEIN DNAA"/>
    <property type="match status" value="1"/>
</dbReference>
<dbReference type="PANTHER" id="PTHR30050:SF2">
    <property type="entry name" value="CHROMOSOMAL REPLICATION INITIATOR PROTEIN DNAA"/>
    <property type="match status" value="1"/>
</dbReference>
<dbReference type="Pfam" id="PF00308">
    <property type="entry name" value="Bac_DnaA"/>
    <property type="match status" value="1"/>
</dbReference>
<dbReference type="Pfam" id="PF08299">
    <property type="entry name" value="Bac_DnaA_C"/>
    <property type="match status" value="1"/>
</dbReference>
<dbReference type="Pfam" id="PF11638">
    <property type="entry name" value="DnaA_N"/>
    <property type="match status" value="1"/>
</dbReference>
<dbReference type="PRINTS" id="PR00051">
    <property type="entry name" value="DNAA"/>
</dbReference>
<dbReference type="SMART" id="SM00382">
    <property type="entry name" value="AAA"/>
    <property type="match status" value="1"/>
</dbReference>
<dbReference type="SMART" id="SM00760">
    <property type="entry name" value="Bac_DnaA_C"/>
    <property type="match status" value="1"/>
</dbReference>
<dbReference type="SUPFAM" id="SSF52540">
    <property type="entry name" value="P-loop containing nucleoside triphosphate hydrolases"/>
    <property type="match status" value="1"/>
</dbReference>
<dbReference type="SUPFAM" id="SSF48295">
    <property type="entry name" value="TrpR-like"/>
    <property type="match status" value="1"/>
</dbReference>
<dbReference type="PROSITE" id="PS01008">
    <property type="entry name" value="DNAA"/>
    <property type="match status" value="1"/>
</dbReference>